<name>TRPD_STRZP</name>
<protein>
    <recommendedName>
        <fullName evidence="1">Anthranilate phosphoribosyltransferase</fullName>
        <ecNumber evidence="1">2.4.2.18</ecNumber>
    </recommendedName>
</protein>
<accession>C1CMD6</accession>
<sequence length="334" mass="35933">MKEIIEKLAKFENLSGVEMTDVIERIVTGRVTEAQIASLLLALKMKGETPEERTAIARVMRGHAQHIPTEIHDAMDNCGTGGDKSFSFNISTTAAFVLAGGGIHMAKHGNRSISSKSGSADVLEALGINLDLKPAELGKVFDKTGIVFLFAKNMHPAMKYIMPARLELGIPTIMNLTGPLIHPMALETQLLGISRPELLESTAQVLKNMGRKRAIVVAGPEGLDEAGLNGTTKIALLENGEISLSSFTPEDLGMEGYAMEDIRGGNAQENAEILLSVLKNEASPFLETTVLNAGLGFYANGKIDSIKEGVALARQVIARGKALEKLRLLQEYQK</sequence>
<keyword id="KW-0028">Amino-acid biosynthesis</keyword>
<keyword id="KW-0057">Aromatic amino acid biosynthesis</keyword>
<keyword id="KW-0328">Glycosyltransferase</keyword>
<keyword id="KW-0460">Magnesium</keyword>
<keyword id="KW-0479">Metal-binding</keyword>
<keyword id="KW-0808">Transferase</keyword>
<keyword id="KW-0822">Tryptophan biosynthesis</keyword>
<feature type="chain" id="PRO_1000198843" description="Anthranilate phosphoribosyltransferase">
    <location>
        <begin position="1"/>
        <end position="334"/>
    </location>
</feature>
<feature type="binding site" evidence="1">
    <location>
        <position position="79"/>
    </location>
    <ligand>
        <name>5-phospho-alpha-D-ribose 1-diphosphate</name>
        <dbReference type="ChEBI" id="CHEBI:58017"/>
    </ligand>
</feature>
<feature type="binding site" evidence="1">
    <location>
        <position position="79"/>
    </location>
    <ligand>
        <name>anthranilate</name>
        <dbReference type="ChEBI" id="CHEBI:16567"/>
        <label>1</label>
    </ligand>
</feature>
<feature type="binding site" evidence="1">
    <location>
        <begin position="82"/>
        <end position="83"/>
    </location>
    <ligand>
        <name>5-phospho-alpha-D-ribose 1-diphosphate</name>
        <dbReference type="ChEBI" id="CHEBI:58017"/>
    </ligand>
</feature>
<feature type="binding site" evidence="1">
    <location>
        <position position="87"/>
    </location>
    <ligand>
        <name>5-phospho-alpha-D-ribose 1-diphosphate</name>
        <dbReference type="ChEBI" id="CHEBI:58017"/>
    </ligand>
</feature>
<feature type="binding site" evidence="1">
    <location>
        <begin position="89"/>
        <end position="92"/>
    </location>
    <ligand>
        <name>5-phospho-alpha-D-ribose 1-diphosphate</name>
        <dbReference type="ChEBI" id="CHEBI:58017"/>
    </ligand>
</feature>
<feature type="binding site" evidence="1">
    <location>
        <position position="91"/>
    </location>
    <ligand>
        <name>Mg(2+)</name>
        <dbReference type="ChEBI" id="CHEBI:18420"/>
        <label>1</label>
    </ligand>
</feature>
<feature type="binding site" evidence="1">
    <location>
        <begin position="107"/>
        <end position="115"/>
    </location>
    <ligand>
        <name>5-phospho-alpha-D-ribose 1-diphosphate</name>
        <dbReference type="ChEBI" id="CHEBI:58017"/>
    </ligand>
</feature>
<feature type="binding site" evidence="1">
    <location>
        <position position="110"/>
    </location>
    <ligand>
        <name>anthranilate</name>
        <dbReference type="ChEBI" id="CHEBI:16567"/>
        <label>1</label>
    </ligand>
</feature>
<feature type="binding site" evidence="1">
    <location>
        <position position="119"/>
    </location>
    <ligand>
        <name>5-phospho-alpha-D-ribose 1-diphosphate</name>
        <dbReference type="ChEBI" id="CHEBI:58017"/>
    </ligand>
</feature>
<feature type="binding site" evidence="1">
    <location>
        <position position="165"/>
    </location>
    <ligand>
        <name>anthranilate</name>
        <dbReference type="ChEBI" id="CHEBI:16567"/>
        <label>2</label>
    </ligand>
</feature>
<feature type="binding site" evidence="1">
    <location>
        <position position="224"/>
    </location>
    <ligand>
        <name>Mg(2+)</name>
        <dbReference type="ChEBI" id="CHEBI:18420"/>
        <label>2</label>
    </ligand>
</feature>
<feature type="binding site" evidence="1">
    <location>
        <position position="225"/>
    </location>
    <ligand>
        <name>Mg(2+)</name>
        <dbReference type="ChEBI" id="CHEBI:18420"/>
        <label>1</label>
    </ligand>
</feature>
<feature type="binding site" evidence="1">
    <location>
        <position position="225"/>
    </location>
    <ligand>
        <name>Mg(2+)</name>
        <dbReference type="ChEBI" id="CHEBI:18420"/>
        <label>2</label>
    </ligand>
</feature>
<evidence type="ECO:0000255" key="1">
    <source>
        <dbReference type="HAMAP-Rule" id="MF_00211"/>
    </source>
</evidence>
<reference key="1">
    <citation type="journal article" date="2010" name="Genome Biol.">
        <title>Structure and dynamics of the pan-genome of Streptococcus pneumoniae and closely related species.</title>
        <authorList>
            <person name="Donati C."/>
            <person name="Hiller N.L."/>
            <person name="Tettelin H."/>
            <person name="Muzzi A."/>
            <person name="Croucher N.J."/>
            <person name="Angiuoli S.V."/>
            <person name="Oggioni M."/>
            <person name="Dunning Hotopp J.C."/>
            <person name="Hu F.Z."/>
            <person name="Riley D.R."/>
            <person name="Covacci A."/>
            <person name="Mitchell T.J."/>
            <person name="Bentley S.D."/>
            <person name="Kilian M."/>
            <person name="Ehrlich G.D."/>
            <person name="Rappuoli R."/>
            <person name="Moxon E.R."/>
            <person name="Masignani V."/>
        </authorList>
    </citation>
    <scope>NUCLEOTIDE SEQUENCE [LARGE SCALE GENOMIC DNA]</scope>
    <source>
        <strain>P1031</strain>
    </source>
</reference>
<gene>
    <name evidence="1" type="primary">trpD</name>
    <name type="ordered locus">SPP_1823</name>
</gene>
<comment type="function">
    <text evidence="1">Catalyzes the transfer of the phosphoribosyl group of 5-phosphorylribose-1-pyrophosphate (PRPP) to anthranilate to yield N-(5'-phosphoribosyl)-anthranilate (PRA).</text>
</comment>
<comment type="catalytic activity">
    <reaction evidence="1">
        <text>N-(5-phospho-beta-D-ribosyl)anthranilate + diphosphate = 5-phospho-alpha-D-ribose 1-diphosphate + anthranilate</text>
        <dbReference type="Rhea" id="RHEA:11768"/>
        <dbReference type="ChEBI" id="CHEBI:16567"/>
        <dbReference type="ChEBI" id="CHEBI:18277"/>
        <dbReference type="ChEBI" id="CHEBI:33019"/>
        <dbReference type="ChEBI" id="CHEBI:58017"/>
        <dbReference type="EC" id="2.4.2.18"/>
    </reaction>
</comment>
<comment type="cofactor">
    <cofactor evidence="1">
        <name>Mg(2+)</name>
        <dbReference type="ChEBI" id="CHEBI:18420"/>
    </cofactor>
    <text evidence="1">Binds 2 magnesium ions per monomer.</text>
</comment>
<comment type="pathway">
    <text evidence="1">Amino-acid biosynthesis; L-tryptophan biosynthesis; L-tryptophan from chorismate: step 2/5.</text>
</comment>
<comment type="subunit">
    <text evidence="1">Homodimer.</text>
</comment>
<comment type="similarity">
    <text evidence="1">Belongs to the anthranilate phosphoribosyltransferase family.</text>
</comment>
<proteinExistence type="inferred from homology"/>
<organism>
    <name type="scientific">Streptococcus pneumoniae (strain P1031)</name>
    <dbReference type="NCBI Taxonomy" id="488223"/>
    <lineage>
        <taxon>Bacteria</taxon>
        <taxon>Bacillati</taxon>
        <taxon>Bacillota</taxon>
        <taxon>Bacilli</taxon>
        <taxon>Lactobacillales</taxon>
        <taxon>Streptococcaceae</taxon>
        <taxon>Streptococcus</taxon>
    </lineage>
</organism>
<dbReference type="EC" id="2.4.2.18" evidence="1"/>
<dbReference type="EMBL" id="CP000920">
    <property type="protein sequence ID" value="ACO20685.1"/>
    <property type="molecule type" value="Genomic_DNA"/>
</dbReference>
<dbReference type="RefSeq" id="WP_000658716.1">
    <property type="nucleotide sequence ID" value="NC_012467.1"/>
</dbReference>
<dbReference type="SMR" id="C1CMD6"/>
<dbReference type="KEGG" id="spp:SPP_1823"/>
<dbReference type="HOGENOM" id="CLU_034315_2_1_9"/>
<dbReference type="UniPathway" id="UPA00035">
    <property type="reaction ID" value="UER00041"/>
</dbReference>
<dbReference type="GO" id="GO:0005829">
    <property type="term" value="C:cytosol"/>
    <property type="evidence" value="ECO:0007669"/>
    <property type="project" value="TreeGrafter"/>
</dbReference>
<dbReference type="GO" id="GO:0004048">
    <property type="term" value="F:anthranilate phosphoribosyltransferase activity"/>
    <property type="evidence" value="ECO:0007669"/>
    <property type="project" value="UniProtKB-UniRule"/>
</dbReference>
<dbReference type="GO" id="GO:0000287">
    <property type="term" value="F:magnesium ion binding"/>
    <property type="evidence" value="ECO:0007669"/>
    <property type="project" value="UniProtKB-UniRule"/>
</dbReference>
<dbReference type="GO" id="GO:0000162">
    <property type="term" value="P:L-tryptophan biosynthetic process"/>
    <property type="evidence" value="ECO:0007669"/>
    <property type="project" value="UniProtKB-UniRule"/>
</dbReference>
<dbReference type="FunFam" id="3.40.1030.10:FF:000002">
    <property type="entry name" value="Anthranilate phosphoribosyltransferase"/>
    <property type="match status" value="1"/>
</dbReference>
<dbReference type="Gene3D" id="3.40.1030.10">
    <property type="entry name" value="Nucleoside phosphorylase/phosphoribosyltransferase catalytic domain"/>
    <property type="match status" value="1"/>
</dbReference>
<dbReference type="Gene3D" id="1.20.970.10">
    <property type="entry name" value="Transferase, Pyrimidine Nucleoside Phosphorylase, Chain C"/>
    <property type="match status" value="1"/>
</dbReference>
<dbReference type="HAMAP" id="MF_00211">
    <property type="entry name" value="TrpD"/>
    <property type="match status" value="1"/>
</dbReference>
<dbReference type="InterPro" id="IPR005940">
    <property type="entry name" value="Anthranilate_Pribosyl_Tfrase"/>
</dbReference>
<dbReference type="InterPro" id="IPR000312">
    <property type="entry name" value="Glycosyl_Trfase_fam3"/>
</dbReference>
<dbReference type="InterPro" id="IPR017459">
    <property type="entry name" value="Glycosyl_Trfase_fam3_N_dom"/>
</dbReference>
<dbReference type="InterPro" id="IPR036320">
    <property type="entry name" value="Glycosyl_Trfase_fam3_N_dom_sf"/>
</dbReference>
<dbReference type="InterPro" id="IPR035902">
    <property type="entry name" value="Nuc_phospho_transferase"/>
</dbReference>
<dbReference type="NCBIfam" id="TIGR01245">
    <property type="entry name" value="trpD"/>
    <property type="match status" value="1"/>
</dbReference>
<dbReference type="PANTHER" id="PTHR43285">
    <property type="entry name" value="ANTHRANILATE PHOSPHORIBOSYLTRANSFERASE"/>
    <property type="match status" value="1"/>
</dbReference>
<dbReference type="PANTHER" id="PTHR43285:SF2">
    <property type="entry name" value="ANTHRANILATE PHOSPHORIBOSYLTRANSFERASE"/>
    <property type="match status" value="1"/>
</dbReference>
<dbReference type="Pfam" id="PF02885">
    <property type="entry name" value="Glycos_trans_3N"/>
    <property type="match status" value="1"/>
</dbReference>
<dbReference type="Pfam" id="PF00591">
    <property type="entry name" value="Glycos_transf_3"/>
    <property type="match status" value="1"/>
</dbReference>
<dbReference type="SUPFAM" id="SSF52418">
    <property type="entry name" value="Nucleoside phosphorylase/phosphoribosyltransferase catalytic domain"/>
    <property type="match status" value="1"/>
</dbReference>
<dbReference type="SUPFAM" id="SSF47648">
    <property type="entry name" value="Nucleoside phosphorylase/phosphoribosyltransferase N-terminal domain"/>
    <property type="match status" value="1"/>
</dbReference>